<proteinExistence type="evidence at protein level"/>
<comment type="function">
    <text>Potential calcium-dependent cell-adhesion protein. May be involved in the establishment and maintenance of specific neuronal connections in the brain.</text>
</comment>
<comment type="subcellular location">
    <subcellularLocation>
        <location evidence="1">Cell membrane</location>
        <topology evidence="1">Single-pass type I membrane protein</topology>
    </subcellularLocation>
</comment>
<comment type="alternative products">
    <event type="alternative splicing"/>
    <isoform>
        <id>Q9UN75-1</id>
        <name>1</name>
        <sequence type="displayed"/>
    </isoform>
    <isoform>
        <id>Q9UN75-2</id>
        <name>2</name>
        <sequence type="described" ref="VSP_000695 VSP_000696"/>
    </isoform>
</comment>
<sequence length="941" mass="101652">MVIIGPRGPGSQRLLLSLLLLAAWEVGSGQLHYSVYEEAKHGTFVGRIAQDLGLELAELVPRLFRVASKRHGDLLEVNLQNGILFVNSRIDREKLCGRSAECSIHLEVIVDRPLQVFHVDVEVKDINDNPPVFREREQKVPVSESAPLDSHFPLEGASDADIGVNSLLTYALSLNENFELKIKTKKDKSILPELVLRKLLDREQTPKLNLLLMVIDGGKPELTGSVQIQITVLDVNDNGPAFDKPSYKVVLSENVQNDTRVIQLNASDPDEGLNGEISYGIKMILPVSEKCMFSINPDTGEIRIYGELDFEENNAYEIQVNAIDKGIPSMAGHSMVLVEVLDVNDNVPEVMVTSLSLPVQEDAQVGTVIALISVSDRDSGANGQVICSLTPHVPFKLVSTYKNYYSLVLDSALDRESVSAYELVVTARDGGSPSLWATARVSVEVADVNDNAPAFAQPEYTVFVKENNPPGCHIFTVSAWDADAQKNALVSYSLVERRVGEHALSSYVSVHAESGKVYALQPLDHEELELLQFQVSARDAGVPPLGSNVTLQVFVLDENDNAPALLATPAGSAGGAVSELVPRSVGAGHVVAKVRAVDADSGYNAWLSYELQPAAVGAHIPFHVGLYTGEISTTRILDEADAPRHRLLVLVKDHGEPALTSTATVLVSLVENGQAPKTSSRASVGAVDPEAALVDINVYLIIAICAVSSLLVLTLLLYTALRCSAPPTVSRCAPGKPTLVCSSAVGSWSYSQQRRQRVCSAESPPKTDLMAFSPSLQLSREDCLNPPSEPRQPNPDWRYSASLRAGMHSSVHLEEAGILRAGPGGPDQQWPTVSSATPEPEAGEVSPPVGAGVNSNSWTFKYGPGNPKQSGPGELPDKFIIPGSPAIISIRQEPTNSQIDKSDFITFGKKEETKKKKKKKKGNKTQEKKEKGNSTTDNSDQ</sequence>
<dbReference type="EMBL" id="AF152308">
    <property type="protein sequence ID" value="AAD43702.1"/>
    <property type="molecule type" value="mRNA"/>
</dbReference>
<dbReference type="EMBL" id="AF152477">
    <property type="protein sequence ID" value="AAD43738.1"/>
    <property type="molecule type" value="mRNA"/>
</dbReference>
<dbReference type="EMBL" id="AC005609">
    <property type="protein sequence ID" value="AAC34315.1"/>
    <property type="molecule type" value="Genomic_DNA"/>
</dbReference>
<dbReference type="EMBL" id="BC112280">
    <property type="protein sequence ID" value="AAI12281.1"/>
    <property type="molecule type" value="mRNA"/>
</dbReference>
<dbReference type="EMBL" id="BC113372">
    <property type="protein sequence ID" value="AAI13373.1"/>
    <property type="molecule type" value="mRNA"/>
</dbReference>
<dbReference type="CCDS" id="CCDS47285.1">
    <molecule id="Q9UN75-1"/>
</dbReference>
<dbReference type="CCDS" id="CCDS75327.1">
    <molecule id="Q9UN75-2"/>
</dbReference>
<dbReference type="RefSeq" id="NP_061726.1">
    <molecule id="Q9UN75-1"/>
    <property type="nucleotide sequence ID" value="NM_018903.4"/>
</dbReference>
<dbReference type="RefSeq" id="NP_114070.1">
    <molecule id="Q9UN75-2"/>
    <property type="nucleotide sequence ID" value="NM_031864.3"/>
</dbReference>
<dbReference type="SMR" id="Q9UN75"/>
<dbReference type="BioGRID" id="121077">
    <property type="interactions" value="57"/>
</dbReference>
<dbReference type="FunCoup" id="Q9UN75">
    <property type="interactions" value="55"/>
</dbReference>
<dbReference type="IntAct" id="Q9UN75">
    <property type="interactions" value="50"/>
</dbReference>
<dbReference type="STRING" id="9606.ENSP00000381628"/>
<dbReference type="GlyConnect" id="1675">
    <property type="glycosylation" value="1 N-Linked glycan (1 site)"/>
</dbReference>
<dbReference type="GlyCosmos" id="Q9UN75">
    <property type="glycosylation" value="3 sites, 1 glycan"/>
</dbReference>
<dbReference type="GlyGen" id="Q9UN75">
    <property type="glycosylation" value="3 sites, 1 N-linked glycan (1 site)"/>
</dbReference>
<dbReference type="iPTMnet" id="Q9UN75"/>
<dbReference type="PhosphoSitePlus" id="Q9UN75"/>
<dbReference type="BioMuta" id="PCDHA12"/>
<dbReference type="DMDM" id="13878425"/>
<dbReference type="jPOST" id="Q9UN75"/>
<dbReference type="MassIVE" id="Q9UN75"/>
<dbReference type="PaxDb" id="9606-ENSP00000381628"/>
<dbReference type="PeptideAtlas" id="Q9UN75"/>
<dbReference type="ProteomicsDB" id="85266">
    <molecule id="Q9UN75-1"/>
</dbReference>
<dbReference type="ProteomicsDB" id="85267">
    <molecule id="Q9UN75-2"/>
</dbReference>
<dbReference type="Antibodypedia" id="45507">
    <property type="antibodies" value="152 antibodies from 23 providers"/>
</dbReference>
<dbReference type="DNASU" id="56137"/>
<dbReference type="Ensembl" id="ENST00000398631.3">
    <molecule id="Q9UN75-1"/>
    <property type="protein sequence ID" value="ENSP00000381628.2"/>
    <property type="gene ID" value="ENSG00000251664.5"/>
</dbReference>
<dbReference type="Ensembl" id="ENST00000613593.1">
    <molecule id="Q9UN75-2"/>
    <property type="protein sequence ID" value="ENSP00000481404.1"/>
    <property type="gene ID" value="ENSG00000251664.5"/>
</dbReference>
<dbReference type="Ensembl" id="ENST00000708320.1">
    <molecule id="Q9UN75-2"/>
    <property type="protein sequence ID" value="ENSP00000517168.1"/>
    <property type="gene ID" value="ENSG00000291663.1"/>
</dbReference>
<dbReference type="Ensembl" id="ENST00000708321.1">
    <molecule id="Q9UN75-1"/>
    <property type="protein sequence ID" value="ENSP00000517169.1"/>
    <property type="gene ID" value="ENSG00000291663.1"/>
</dbReference>
<dbReference type="GeneID" id="56137"/>
<dbReference type="KEGG" id="hsa:56137"/>
<dbReference type="MANE-Select" id="ENST00000398631.3">
    <property type="protein sequence ID" value="ENSP00000381628.2"/>
    <property type="RefSeq nucleotide sequence ID" value="NM_018903.4"/>
    <property type="RefSeq protein sequence ID" value="NP_061726.1"/>
</dbReference>
<dbReference type="UCSC" id="uc003lic.4">
    <molecule id="Q9UN75-1"/>
    <property type="organism name" value="human"/>
</dbReference>
<dbReference type="AGR" id="HGNC:8666"/>
<dbReference type="CTD" id="56137"/>
<dbReference type="DisGeNET" id="56137"/>
<dbReference type="GeneCards" id="PCDHA12"/>
<dbReference type="HGNC" id="HGNC:8666">
    <property type="gene designation" value="PCDHA12"/>
</dbReference>
<dbReference type="HPA" id="ENSG00000251664">
    <property type="expression patterns" value="Tissue enhanced (brain)"/>
</dbReference>
<dbReference type="MIM" id="604966">
    <property type="type" value="gene"/>
</dbReference>
<dbReference type="MIM" id="606318">
    <property type="type" value="gene"/>
</dbReference>
<dbReference type="neXtProt" id="NX_Q9UN75"/>
<dbReference type="OpenTargets" id="ENSG00000251664"/>
<dbReference type="PharmGKB" id="PA33012"/>
<dbReference type="VEuPathDB" id="HostDB:ENSG00000251664"/>
<dbReference type="eggNOG" id="KOG3594">
    <property type="taxonomic scope" value="Eukaryota"/>
</dbReference>
<dbReference type="GeneTree" id="ENSGT00940000164036"/>
<dbReference type="HOGENOM" id="CLU_006480_0_1_1"/>
<dbReference type="InParanoid" id="Q9UN75"/>
<dbReference type="OMA" id="ENAMITY"/>
<dbReference type="OrthoDB" id="6252479at2759"/>
<dbReference type="PAN-GO" id="Q9UN75">
    <property type="GO annotations" value="2 GO annotations based on evolutionary models"/>
</dbReference>
<dbReference type="PhylomeDB" id="Q9UN75"/>
<dbReference type="TreeFam" id="TF332299"/>
<dbReference type="PathwayCommons" id="Q9UN75"/>
<dbReference type="SignaLink" id="Q9UN75"/>
<dbReference type="SIGNOR" id="Q9UN75"/>
<dbReference type="BioGRID-ORCS" id="56137">
    <property type="hits" value="13 hits in 1097 CRISPR screens"/>
</dbReference>
<dbReference type="GeneWiki" id="PCDHA12"/>
<dbReference type="GenomeRNAi" id="56137"/>
<dbReference type="Pharos" id="Q9UN75">
    <property type="development level" value="Tdark"/>
</dbReference>
<dbReference type="PRO" id="PR:Q9UN75"/>
<dbReference type="Proteomes" id="UP000005640">
    <property type="component" value="Chromosome 5"/>
</dbReference>
<dbReference type="RNAct" id="Q9UN75">
    <property type="molecule type" value="protein"/>
</dbReference>
<dbReference type="Bgee" id="ENSG00000251664">
    <property type="expression patterns" value="Expressed in male germ line stem cell (sensu Vertebrata) in testis and 62 other cell types or tissues"/>
</dbReference>
<dbReference type="ExpressionAtlas" id="Q9UN75">
    <property type="expression patterns" value="baseline and differential"/>
</dbReference>
<dbReference type="GO" id="GO:0005886">
    <property type="term" value="C:plasma membrane"/>
    <property type="evidence" value="ECO:0000318"/>
    <property type="project" value="GO_Central"/>
</dbReference>
<dbReference type="GO" id="GO:0005509">
    <property type="term" value="F:calcium ion binding"/>
    <property type="evidence" value="ECO:0007669"/>
    <property type="project" value="InterPro"/>
</dbReference>
<dbReference type="GO" id="GO:0007155">
    <property type="term" value="P:cell adhesion"/>
    <property type="evidence" value="ECO:0000318"/>
    <property type="project" value="GO_Central"/>
</dbReference>
<dbReference type="GO" id="GO:0007156">
    <property type="term" value="P:homophilic cell adhesion via plasma membrane adhesion molecules"/>
    <property type="evidence" value="ECO:0007669"/>
    <property type="project" value="InterPro"/>
</dbReference>
<dbReference type="GO" id="GO:0007399">
    <property type="term" value="P:nervous system development"/>
    <property type="evidence" value="ECO:0007669"/>
    <property type="project" value="UniProtKB-ARBA"/>
</dbReference>
<dbReference type="CDD" id="cd11304">
    <property type="entry name" value="Cadherin_repeat"/>
    <property type="match status" value="6"/>
</dbReference>
<dbReference type="FunFam" id="2.60.40.60:FF:000001">
    <property type="entry name" value="Protocadherin alpha 2"/>
    <property type="match status" value="1"/>
</dbReference>
<dbReference type="FunFam" id="2.60.40.60:FF:000002">
    <property type="entry name" value="Protocadherin alpha 2"/>
    <property type="match status" value="1"/>
</dbReference>
<dbReference type="FunFam" id="2.60.40.60:FF:000003">
    <property type="entry name" value="Protocadherin alpha 2"/>
    <property type="match status" value="1"/>
</dbReference>
<dbReference type="FunFam" id="2.60.40.60:FF:000006">
    <property type="entry name" value="Protocadherin alpha 2"/>
    <property type="match status" value="1"/>
</dbReference>
<dbReference type="FunFam" id="2.60.40.60:FF:000007">
    <property type="entry name" value="Protocadherin alpha 2"/>
    <property type="match status" value="1"/>
</dbReference>
<dbReference type="FunFam" id="2.60.40.60:FF:000076">
    <property type="entry name" value="Protocadherin alpha 2"/>
    <property type="match status" value="1"/>
</dbReference>
<dbReference type="Gene3D" id="2.60.40.60">
    <property type="entry name" value="Cadherins"/>
    <property type="match status" value="6"/>
</dbReference>
<dbReference type="InterPro" id="IPR002126">
    <property type="entry name" value="Cadherin-like_dom"/>
</dbReference>
<dbReference type="InterPro" id="IPR015919">
    <property type="entry name" value="Cadherin-like_sf"/>
</dbReference>
<dbReference type="InterPro" id="IPR031904">
    <property type="entry name" value="Cadherin_CBD"/>
</dbReference>
<dbReference type="InterPro" id="IPR020894">
    <property type="entry name" value="Cadherin_CS"/>
</dbReference>
<dbReference type="InterPro" id="IPR013164">
    <property type="entry name" value="Cadherin_N"/>
</dbReference>
<dbReference type="InterPro" id="IPR050174">
    <property type="entry name" value="Protocadherin/Cadherin-CA"/>
</dbReference>
<dbReference type="PANTHER" id="PTHR24028">
    <property type="entry name" value="CADHERIN-87A"/>
    <property type="match status" value="1"/>
</dbReference>
<dbReference type="PANTHER" id="PTHR24028:SF76">
    <property type="entry name" value="PROTOCADHERIN ALPHA-12"/>
    <property type="match status" value="1"/>
</dbReference>
<dbReference type="Pfam" id="PF00028">
    <property type="entry name" value="Cadherin"/>
    <property type="match status" value="5"/>
</dbReference>
<dbReference type="Pfam" id="PF08266">
    <property type="entry name" value="Cadherin_2"/>
    <property type="match status" value="1"/>
</dbReference>
<dbReference type="Pfam" id="PF15974">
    <property type="entry name" value="Cadherin_tail"/>
    <property type="match status" value="1"/>
</dbReference>
<dbReference type="PRINTS" id="PR00205">
    <property type="entry name" value="CADHERIN"/>
</dbReference>
<dbReference type="SMART" id="SM00112">
    <property type="entry name" value="CA"/>
    <property type="match status" value="6"/>
</dbReference>
<dbReference type="SUPFAM" id="SSF49313">
    <property type="entry name" value="Cadherin-like"/>
    <property type="match status" value="6"/>
</dbReference>
<dbReference type="PROSITE" id="PS00232">
    <property type="entry name" value="CADHERIN_1"/>
    <property type="match status" value="5"/>
</dbReference>
<dbReference type="PROSITE" id="PS50268">
    <property type="entry name" value="CADHERIN_2"/>
    <property type="match status" value="6"/>
</dbReference>
<protein>
    <recommendedName>
        <fullName>Protocadherin alpha-12</fullName>
        <shortName>PCDH-alpha-12</shortName>
    </recommendedName>
</protein>
<reference key="1">
    <citation type="journal article" date="1999" name="Cell">
        <title>A striking organization of a large family of human neural cadherin-like cell adhesion genes.</title>
        <authorList>
            <person name="Wu Q."/>
            <person name="Maniatis T."/>
        </authorList>
    </citation>
    <scope>NUCLEOTIDE SEQUENCE [MRNA] (ISOFORMS 1 AND 2)</scope>
    <source>
        <tissue>Brain</tissue>
    </source>
</reference>
<reference key="2">
    <citation type="journal article" date="2004" name="Nature">
        <title>The DNA sequence and comparative analysis of human chromosome 5.</title>
        <authorList>
            <person name="Schmutz J."/>
            <person name="Martin J."/>
            <person name="Terry A."/>
            <person name="Couronne O."/>
            <person name="Grimwood J."/>
            <person name="Lowry S."/>
            <person name="Gordon L.A."/>
            <person name="Scott D."/>
            <person name="Xie G."/>
            <person name="Huang W."/>
            <person name="Hellsten U."/>
            <person name="Tran-Gyamfi M."/>
            <person name="She X."/>
            <person name="Prabhakar S."/>
            <person name="Aerts A."/>
            <person name="Altherr M."/>
            <person name="Bajorek E."/>
            <person name="Black S."/>
            <person name="Branscomb E."/>
            <person name="Caoile C."/>
            <person name="Challacombe J.F."/>
            <person name="Chan Y.M."/>
            <person name="Denys M."/>
            <person name="Detter J.C."/>
            <person name="Escobar J."/>
            <person name="Flowers D."/>
            <person name="Fotopulos D."/>
            <person name="Glavina T."/>
            <person name="Gomez M."/>
            <person name="Gonzales E."/>
            <person name="Goodstein D."/>
            <person name="Grigoriev I."/>
            <person name="Groza M."/>
            <person name="Hammon N."/>
            <person name="Hawkins T."/>
            <person name="Haydu L."/>
            <person name="Israni S."/>
            <person name="Jett J."/>
            <person name="Kadner K."/>
            <person name="Kimball H."/>
            <person name="Kobayashi A."/>
            <person name="Lopez F."/>
            <person name="Lou Y."/>
            <person name="Martinez D."/>
            <person name="Medina C."/>
            <person name="Morgan J."/>
            <person name="Nandkeshwar R."/>
            <person name="Noonan J.P."/>
            <person name="Pitluck S."/>
            <person name="Pollard M."/>
            <person name="Predki P."/>
            <person name="Priest J."/>
            <person name="Ramirez L."/>
            <person name="Retterer J."/>
            <person name="Rodriguez A."/>
            <person name="Rogers S."/>
            <person name="Salamov A."/>
            <person name="Salazar A."/>
            <person name="Thayer N."/>
            <person name="Tice H."/>
            <person name="Tsai M."/>
            <person name="Ustaszewska A."/>
            <person name="Vo N."/>
            <person name="Wheeler J."/>
            <person name="Wu K."/>
            <person name="Yang J."/>
            <person name="Dickson M."/>
            <person name="Cheng J.-F."/>
            <person name="Eichler E.E."/>
            <person name="Olsen A."/>
            <person name="Pennacchio L.A."/>
            <person name="Rokhsar D.S."/>
            <person name="Richardson P."/>
            <person name="Lucas S.M."/>
            <person name="Myers R.M."/>
            <person name="Rubin E.M."/>
        </authorList>
    </citation>
    <scope>NUCLEOTIDE SEQUENCE [LARGE SCALE GENOMIC DNA]</scope>
</reference>
<reference key="3">
    <citation type="journal article" date="2004" name="Genome Res.">
        <title>The status, quality, and expansion of the NIH full-length cDNA project: the Mammalian Gene Collection (MGC).</title>
        <authorList>
            <consortium name="The MGC Project Team"/>
        </authorList>
    </citation>
    <scope>NUCLEOTIDE SEQUENCE [LARGE SCALE MRNA] (ISOFORM 2)</scope>
    <source>
        <tissue>Cerebellum</tissue>
    </source>
</reference>
<accession>Q9UN75</accession>
<accession>O75278</accession>
<accession>Q2M1N8</accession>
<evidence type="ECO:0000250" key="1"/>
<evidence type="ECO:0000255" key="2"/>
<evidence type="ECO:0000255" key="3">
    <source>
        <dbReference type="PROSITE-ProRule" id="PRU00043"/>
    </source>
</evidence>
<evidence type="ECO:0000256" key="4">
    <source>
        <dbReference type="SAM" id="MobiDB-lite"/>
    </source>
</evidence>
<evidence type="ECO:0000303" key="5">
    <source>
    </source>
</evidence>
<evidence type="ECO:0000303" key="6">
    <source>
    </source>
</evidence>
<keyword id="KW-0025">Alternative splicing</keyword>
<keyword id="KW-0106">Calcium</keyword>
<keyword id="KW-0130">Cell adhesion</keyword>
<keyword id="KW-1003">Cell membrane</keyword>
<keyword id="KW-0325">Glycoprotein</keyword>
<keyword id="KW-0472">Membrane</keyword>
<keyword id="KW-1267">Proteomics identification</keyword>
<keyword id="KW-1185">Reference proteome</keyword>
<keyword id="KW-0677">Repeat</keyword>
<keyword id="KW-0732">Signal</keyword>
<keyword id="KW-0812">Transmembrane</keyword>
<keyword id="KW-1133">Transmembrane helix</keyword>
<organism>
    <name type="scientific">Homo sapiens</name>
    <name type="common">Human</name>
    <dbReference type="NCBI Taxonomy" id="9606"/>
    <lineage>
        <taxon>Eukaryota</taxon>
        <taxon>Metazoa</taxon>
        <taxon>Chordata</taxon>
        <taxon>Craniata</taxon>
        <taxon>Vertebrata</taxon>
        <taxon>Euteleostomi</taxon>
        <taxon>Mammalia</taxon>
        <taxon>Eutheria</taxon>
        <taxon>Euarchontoglires</taxon>
        <taxon>Primates</taxon>
        <taxon>Haplorrhini</taxon>
        <taxon>Catarrhini</taxon>
        <taxon>Hominidae</taxon>
        <taxon>Homo</taxon>
    </lineage>
</organism>
<gene>
    <name type="primary">PCDHA12</name>
</gene>
<feature type="signal peptide" evidence="2">
    <location>
        <begin position="1"/>
        <end position="29"/>
    </location>
</feature>
<feature type="chain" id="PRO_0000003906" description="Protocadherin alpha-12">
    <location>
        <begin position="30"/>
        <end position="941"/>
    </location>
</feature>
<feature type="topological domain" description="Extracellular" evidence="2">
    <location>
        <begin position="30"/>
        <end position="697"/>
    </location>
</feature>
<feature type="transmembrane region" description="Helical" evidence="2">
    <location>
        <begin position="698"/>
        <end position="718"/>
    </location>
</feature>
<feature type="topological domain" description="Cytoplasmic" evidence="2">
    <location>
        <begin position="719"/>
        <end position="941"/>
    </location>
</feature>
<feature type="domain" description="Cadherin 1" evidence="3">
    <location>
        <begin position="30"/>
        <end position="133"/>
    </location>
</feature>
<feature type="domain" description="Cadherin 2" evidence="3">
    <location>
        <begin position="134"/>
        <end position="242"/>
    </location>
</feature>
<feature type="domain" description="Cadherin 3" evidence="3">
    <location>
        <begin position="243"/>
        <end position="350"/>
    </location>
</feature>
<feature type="domain" description="Cadherin 4" evidence="3">
    <location>
        <begin position="351"/>
        <end position="455"/>
    </location>
</feature>
<feature type="domain" description="Cadherin 5" evidence="3">
    <location>
        <begin position="456"/>
        <end position="565"/>
    </location>
</feature>
<feature type="domain" description="Cadherin 6" evidence="3">
    <location>
        <begin position="581"/>
        <end position="678"/>
    </location>
</feature>
<feature type="repeat" description="PXXP 1">
    <location>
        <begin position="734"/>
        <end position="737"/>
    </location>
</feature>
<feature type="repeat" description="PXXP 2">
    <location>
        <begin position="790"/>
        <end position="793"/>
    </location>
</feature>
<feature type="repeat" description="PXXP 3">
    <location>
        <begin position="823"/>
        <end position="826"/>
    </location>
</feature>
<feature type="repeat" description="PXXP 4">
    <location>
        <begin position="863"/>
        <end position="866"/>
    </location>
</feature>
<feature type="repeat" description="PXXP 5">
    <location>
        <begin position="882"/>
        <end position="885"/>
    </location>
</feature>
<feature type="region of interest" description="5 X 4 AA repeats of P-X-X-P">
    <location>
        <begin position="734"/>
        <end position="885"/>
    </location>
</feature>
<feature type="region of interest" description="Disordered" evidence="4">
    <location>
        <begin position="818"/>
        <end position="941"/>
    </location>
</feature>
<feature type="compositionally biased region" description="Basic and acidic residues" evidence="4">
    <location>
        <begin position="900"/>
        <end position="914"/>
    </location>
</feature>
<feature type="glycosylation site" description="N-linked (GlcNAc...) asparagine" evidence="2">
    <location>
        <position position="257"/>
    </location>
</feature>
<feature type="glycosylation site" description="N-linked (GlcNAc...) asparagine" evidence="2">
    <location>
        <position position="265"/>
    </location>
</feature>
<feature type="glycosylation site" description="N-linked (GlcNAc...) asparagine" evidence="2">
    <location>
        <position position="548"/>
    </location>
</feature>
<feature type="splice variant" id="VSP_000695" description="In isoform 2." evidence="5 6">
    <original>PRQ</original>
    <variation>VSY</variation>
    <location>
        <begin position="790"/>
        <end position="792"/>
    </location>
</feature>
<feature type="splice variant" id="VSP_000696" description="In isoform 2." evidence="5 6">
    <location>
        <begin position="793"/>
        <end position="941"/>
    </location>
</feature>
<name>PCDAC_HUMAN</name>